<sequence length="318" mass="36489">MLTKNNSLLSRLPARISFGLKISNKNVNSTYSNVASAYCEGATYKKNGVSRLQNELLSQKTNNETIPVPLQHFIRPAAKHSIFTQIKGYGERSRPEFERPITLEELKSLDYESGKHFVPQSFSDTFAYLIVKGLRAFADLYFQKDYVRRVVVLETVAAIPGMVGGMFRHLYSLRNLEDNGEAIKKLVLEAENERQHLLTFLAVLKPNVLDRMLIKLGQFLFFNGYMVFYFVAPRTAHRFVGYLEEEAVRSYDAFEEEILLGHIKNVEAPRISKDYWNLPEEAMLIDVVRAVRADEAEHRDVNHKMADSKSFSLAHNPY</sequence>
<reference key="1">
    <citation type="journal article" date="2010" name="PLoS Pathog.">
        <title>A broad distribution of the alternative oxidase in microsporidian parasites.</title>
        <authorList>
            <person name="Williams B.A."/>
            <person name="Elliot C."/>
            <person name="Burri L."/>
            <person name="Kido Y."/>
            <person name="Kita K."/>
            <person name="Moore A.L."/>
            <person name="Keeling P.J."/>
        </authorList>
    </citation>
    <scope>NUCLEOTIDE SEQUENCE [GENOMIC DNA]</scope>
    <scope>SUBUNIT</scope>
    <scope>FUNCTION</scope>
    <scope>CATALYTIC ACTIVITY</scope>
</reference>
<reference key="2">
    <citation type="journal article" date="2012" name="PLoS Pathog.">
        <title>The genome of the obligate intracellular parasite Trachipleistophora hominis: new insights into microsporidian genome dynamics and reductive evolution.</title>
        <authorList>
            <person name="Heinz E."/>
            <person name="Williams T.A."/>
            <person name="Nakjang S."/>
            <person name="Noel C.J."/>
            <person name="Swan D.C."/>
            <person name="Goldberg A.V."/>
            <person name="Harris S.R."/>
            <person name="Weinmaier T."/>
            <person name="Markert S."/>
            <person name="Becher D."/>
            <person name="Bernhardt J."/>
            <person name="Dagan T."/>
            <person name="Hacker C."/>
            <person name="Lucocq J.M."/>
            <person name="Schweder T."/>
            <person name="Rattei T."/>
            <person name="Hall N."/>
            <person name="Hirt R.P."/>
            <person name="Embley T.M."/>
        </authorList>
    </citation>
    <scope>NUCLEOTIDE SEQUENCE [LARGE SCALE GENOMIC DNA]</scope>
</reference>
<keyword id="KW-0249">Electron transport</keyword>
<keyword id="KW-0408">Iron</keyword>
<keyword id="KW-0472">Membrane</keyword>
<keyword id="KW-0479">Metal-binding</keyword>
<keyword id="KW-1025">Mitosome</keyword>
<keyword id="KW-0560">Oxidoreductase</keyword>
<keyword id="KW-1185">Reference proteome</keyword>
<keyword id="KW-0679">Respiratory chain</keyword>
<keyword id="KW-0812">Transmembrane</keyword>
<keyword id="KW-1133">Transmembrane helix</keyword>
<keyword id="KW-0813">Transport</keyword>
<protein>
    <recommendedName>
        <fullName>Ubiquinol oxidase</fullName>
        <ecNumber>1.10.3.11</ecNumber>
    </recommendedName>
    <alternativeName>
        <fullName>Alternative oxidase</fullName>
    </alternativeName>
</protein>
<comment type="function">
    <text evidence="3">Alternative oxidase which function may be to reoxidize reducing equivalents produced by glycolysis such as ubiquinol.</text>
</comment>
<comment type="catalytic activity">
    <reaction evidence="3">
        <text>2 a ubiquinol + O2 = 2 a ubiquinone + 2 H2O</text>
        <dbReference type="Rhea" id="RHEA:30255"/>
        <dbReference type="Rhea" id="RHEA-COMP:9565"/>
        <dbReference type="Rhea" id="RHEA-COMP:9566"/>
        <dbReference type="ChEBI" id="CHEBI:15377"/>
        <dbReference type="ChEBI" id="CHEBI:15379"/>
        <dbReference type="ChEBI" id="CHEBI:16389"/>
        <dbReference type="ChEBI" id="CHEBI:17976"/>
        <dbReference type="EC" id="1.10.3.11"/>
    </reaction>
</comment>
<comment type="cofactor">
    <cofactor evidence="1">
        <name>Fe cation</name>
        <dbReference type="ChEBI" id="CHEBI:24875"/>
    </cofactor>
    <text evidence="1">Binds 2 iron ions per subunit.</text>
</comment>
<comment type="subunit">
    <text evidence="3">Found as monomers and homodimers.</text>
</comment>
<comment type="subcellular location">
    <subcellularLocation>
        <location evidence="4">Mitosome membrane</location>
        <topology evidence="4">Multi-pass membrane protein</topology>
    </subcellularLocation>
    <text>Microsporidia do not contain mitochondria, but highly reduced mitochondrial organelles called mitosomes.</text>
</comment>
<comment type="similarity">
    <text evidence="4">Belongs to the alternative oxidase family.</text>
</comment>
<feature type="chain" id="PRO_0000415493" description="Ubiquinol oxidase">
    <location>
        <begin position="1"/>
        <end position="318"/>
    </location>
</feature>
<feature type="transmembrane region" description="Helical" evidence="2">
    <location>
        <begin position="150"/>
        <end position="170"/>
    </location>
</feature>
<feature type="transmembrane region" description="Helical" evidence="2">
    <location>
        <begin position="212"/>
        <end position="232"/>
    </location>
</feature>
<feature type="binding site" evidence="1">
    <location>
        <position position="154"/>
    </location>
    <ligand>
        <name>Fe cation</name>
        <dbReference type="ChEBI" id="CHEBI:24875"/>
        <label>1</label>
    </ligand>
</feature>
<feature type="binding site" evidence="1">
    <location>
        <position position="193"/>
    </location>
    <ligand>
        <name>Fe cation</name>
        <dbReference type="ChEBI" id="CHEBI:24875"/>
        <label>1</label>
    </ligand>
</feature>
<feature type="binding site" evidence="1">
    <location>
        <position position="193"/>
    </location>
    <ligand>
        <name>Fe cation</name>
        <dbReference type="ChEBI" id="CHEBI:24875"/>
        <label>2</label>
    </ligand>
</feature>
<feature type="binding site" evidence="1">
    <location>
        <position position="196"/>
    </location>
    <ligand>
        <name>Fe cation</name>
        <dbReference type="ChEBI" id="CHEBI:24875"/>
        <label>1</label>
    </ligand>
</feature>
<feature type="binding site" evidence="1">
    <location>
        <position position="244"/>
    </location>
    <ligand>
        <name>Fe cation</name>
        <dbReference type="ChEBI" id="CHEBI:24875"/>
        <label>2</label>
    </ligand>
</feature>
<feature type="binding site" evidence="1">
    <location>
        <position position="295"/>
    </location>
    <ligand>
        <name>Fe cation</name>
        <dbReference type="ChEBI" id="CHEBI:24875"/>
        <label>1</label>
    </ligand>
</feature>
<feature type="binding site" evidence="1">
    <location>
        <position position="295"/>
    </location>
    <ligand>
        <name>Fe cation</name>
        <dbReference type="ChEBI" id="CHEBI:24875"/>
        <label>2</label>
    </ligand>
</feature>
<feature type="binding site" evidence="1">
    <location>
        <position position="298"/>
    </location>
    <ligand>
        <name>Fe cation</name>
        <dbReference type="ChEBI" id="CHEBI:24875"/>
        <label>2</label>
    </ligand>
</feature>
<dbReference type="EC" id="1.10.3.11"/>
<dbReference type="EMBL" id="GU221911">
    <property type="protein sequence ID" value="ADE43749.1"/>
    <property type="molecule type" value="Genomic_DNA"/>
</dbReference>
<dbReference type="EMBL" id="JH994008">
    <property type="protein sequence ID" value="ELQ74912.1"/>
    <property type="molecule type" value="Genomic_DNA"/>
</dbReference>
<dbReference type="SMR" id="D5JAJ1"/>
<dbReference type="STRING" id="72359.D5JAJ1"/>
<dbReference type="KEGG" id="ag:ADE43749"/>
<dbReference type="VEuPathDB" id="MicrosporidiaDB:THOM_2158"/>
<dbReference type="HOGENOM" id="CLU_874887_0_0_1"/>
<dbReference type="InParanoid" id="D5JAJ1"/>
<dbReference type="OMA" id="RISKDYW"/>
<dbReference type="OrthoDB" id="16906at2759"/>
<dbReference type="Proteomes" id="UP000011185">
    <property type="component" value="Unassembled WGS sequence"/>
</dbReference>
<dbReference type="GO" id="GO:0016020">
    <property type="term" value="C:membrane"/>
    <property type="evidence" value="ECO:0007669"/>
    <property type="project" value="UniProtKB-KW"/>
</dbReference>
<dbReference type="GO" id="GO:0005739">
    <property type="term" value="C:mitochondrion"/>
    <property type="evidence" value="ECO:0007669"/>
    <property type="project" value="TreeGrafter"/>
</dbReference>
<dbReference type="GO" id="GO:0032047">
    <property type="term" value="C:mitosome"/>
    <property type="evidence" value="ECO:0007669"/>
    <property type="project" value="UniProtKB-KW"/>
</dbReference>
<dbReference type="GO" id="GO:0009916">
    <property type="term" value="F:alternative oxidase activity"/>
    <property type="evidence" value="ECO:0007669"/>
    <property type="project" value="InterPro"/>
</dbReference>
<dbReference type="GO" id="GO:0046872">
    <property type="term" value="F:metal ion binding"/>
    <property type="evidence" value="ECO:0007669"/>
    <property type="project" value="UniProtKB-KW"/>
</dbReference>
<dbReference type="GO" id="GO:0102721">
    <property type="term" value="F:ubiquinol:oxygen oxidoreductase activity"/>
    <property type="evidence" value="ECO:0007669"/>
    <property type="project" value="UniProtKB-EC"/>
</dbReference>
<dbReference type="GO" id="GO:0010230">
    <property type="term" value="P:alternative respiration"/>
    <property type="evidence" value="ECO:0007669"/>
    <property type="project" value="TreeGrafter"/>
</dbReference>
<dbReference type="Gene3D" id="1.20.1260.140">
    <property type="entry name" value="Alternative oxidase"/>
    <property type="match status" value="1"/>
</dbReference>
<dbReference type="InterPro" id="IPR002680">
    <property type="entry name" value="AOX"/>
</dbReference>
<dbReference type="InterPro" id="IPR038659">
    <property type="entry name" value="AOX_sf"/>
</dbReference>
<dbReference type="PANTHER" id="PTHR31803">
    <property type="entry name" value="ALTERNATIVE OXIDASE"/>
    <property type="match status" value="1"/>
</dbReference>
<dbReference type="PANTHER" id="PTHR31803:SF3">
    <property type="entry name" value="ALTERNATIVE OXIDASE"/>
    <property type="match status" value="1"/>
</dbReference>
<dbReference type="Pfam" id="PF01786">
    <property type="entry name" value="AOX"/>
    <property type="match status" value="1"/>
</dbReference>
<dbReference type="PIRSF" id="PIRSF005229">
    <property type="entry name" value="AOX"/>
    <property type="match status" value="1"/>
</dbReference>
<evidence type="ECO:0000250" key="1">
    <source>
        <dbReference type="UniProtKB" id="Q26710"/>
    </source>
</evidence>
<evidence type="ECO:0000255" key="2"/>
<evidence type="ECO:0000269" key="3">
    <source>
    </source>
</evidence>
<evidence type="ECO:0000305" key="4"/>
<proteinExistence type="evidence at protein level"/>
<organism>
    <name type="scientific">Trachipleistophora hominis</name>
    <name type="common">Microsporidian parasite</name>
    <dbReference type="NCBI Taxonomy" id="72359"/>
    <lineage>
        <taxon>Eukaryota</taxon>
        <taxon>Fungi</taxon>
        <taxon>Fungi incertae sedis</taxon>
        <taxon>Microsporidia</taxon>
        <taxon>Pleistophoridae</taxon>
        <taxon>Trachipleistophora</taxon>
    </lineage>
</organism>
<gene>
    <name type="primary">AOX</name>
    <name type="ORF">THOM_2158</name>
</gene>
<name>AOX_TRAHO</name>
<accession>D5JAJ1</accession>
<accession>L7JVY0</accession>